<feature type="chain" id="PRO_0000114096" description="Glutamyl-tRNA reductase">
    <location>
        <begin position="1"/>
        <end position="432"/>
    </location>
</feature>
<feature type="active site" description="Nucleophile" evidence="1">
    <location>
        <position position="50"/>
    </location>
</feature>
<feature type="binding site" evidence="1">
    <location>
        <begin position="49"/>
        <end position="52"/>
    </location>
    <ligand>
        <name>substrate</name>
    </ligand>
</feature>
<feature type="binding site" evidence="1">
    <location>
        <position position="109"/>
    </location>
    <ligand>
        <name>substrate</name>
    </ligand>
</feature>
<feature type="binding site" evidence="1">
    <location>
        <begin position="114"/>
        <end position="116"/>
    </location>
    <ligand>
        <name>substrate</name>
    </ligand>
</feature>
<feature type="binding site" evidence="1">
    <location>
        <position position="120"/>
    </location>
    <ligand>
        <name>substrate</name>
    </ligand>
</feature>
<feature type="binding site" evidence="1">
    <location>
        <begin position="189"/>
        <end position="194"/>
    </location>
    <ligand>
        <name>NADP(+)</name>
        <dbReference type="ChEBI" id="CHEBI:58349"/>
    </ligand>
</feature>
<feature type="site" description="Important for activity" evidence="1">
    <location>
        <position position="99"/>
    </location>
</feature>
<protein>
    <recommendedName>
        <fullName evidence="1">Glutamyl-tRNA reductase</fullName>
        <shortName evidence="1">GluTR</shortName>
        <ecNumber evidence="1">1.2.1.70</ecNumber>
    </recommendedName>
</protein>
<organism>
    <name type="scientific">Cyanophora paradoxa</name>
    <dbReference type="NCBI Taxonomy" id="2762"/>
    <lineage>
        <taxon>Eukaryota</taxon>
        <taxon>Glaucocystophyceae</taxon>
        <taxon>Cyanophoraceae</taxon>
        <taxon>Cyanophora</taxon>
    </lineage>
</organism>
<keyword id="KW-0149">Chlorophyll biosynthesis</keyword>
<keyword id="KW-0194">Cyanelle</keyword>
<keyword id="KW-0521">NADP</keyword>
<keyword id="KW-0560">Oxidoreductase</keyword>
<keyword id="KW-0934">Plastid</keyword>
<keyword id="KW-0627">Porphyrin biosynthesis</keyword>
<evidence type="ECO:0000255" key="1">
    <source>
        <dbReference type="HAMAP-Rule" id="MF_00087"/>
    </source>
</evidence>
<evidence type="ECO:0000305" key="2"/>
<dbReference type="EC" id="1.2.1.70" evidence="1"/>
<dbReference type="EMBL" id="U30821">
    <property type="protein sequence ID" value="AAA81194.1"/>
    <property type="molecule type" value="Genomic_DNA"/>
</dbReference>
<dbReference type="EMBL" id="X17063">
    <property type="protein sequence ID" value="CAC35456.1"/>
    <property type="status" value="ALT_INIT"/>
    <property type="molecule type" value="Genomic_DNA"/>
</dbReference>
<dbReference type="PIR" id="T06851">
    <property type="entry name" value="T06851"/>
</dbReference>
<dbReference type="RefSeq" id="NP_043163.1">
    <property type="nucleotide sequence ID" value="NC_001675.1"/>
</dbReference>
<dbReference type="SMR" id="P48077"/>
<dbReference type="GeneID" id="801525"/>
<dbReference type="UniPathway" id="UPA00251">
    <property type="reaction ID" value="UER00316"/>
</dbReference>
<dbReference type="UniPathway" id="UPA00668"/>
<dbReference type="GO" id="GO:0009842">
    <property type="term" value="C:cyanelle"/>
    <property type="evidence" value="ECO:0007669"/>
    <property type="project" value="UniProtKB-SubCell"/>
</dbReference>
<dbReference type="GO" id="GO:0008883">
    <property type="term" value="F:glutamyl-tRNA reductase activity"/>
    <property type="evidence" value="ECO:0007669"/>
    <property type="project" value="UniProtKB-UniRule"/>
</dbReference>
<dbReference type="GO" id="GO:0050661">
    <property type="term" value="F:NADP binding"/>
    <property type="evidence" value="ECO:0007669"/>
    <property type="project" value="InterPro"/>
</dbReference>
<dbReference type="GO" id="GO:0015995">
    <property type="term" value="P:chlorophyll biosynthetic process"/>
    <property type="evidence" value="ECO:0007669"/>
    <property type="project" value="UniProtKB-UniPathway"/>
</dbReference>
<dbReference type="GO" id="GO:0006782">
    <property type="term" value="P:protoporphyrinogen IX biosynthetic process"/>
    <property type="evidence" value="ECO:0007669"/>
    <property type="project" value="UniProtKB-UniRule"/>
</dbReference>
<dbReference type="CDD" id="cd05213">
    <property type="entry name" value="NAD_bind_Glutamyl_tRNA_reduct"/>
    <property type="match status" value="1"/>
</dbReference>
<dbReference type="FunFam" id="3.30.460.30:FF:000001">
    <property type="entry name" value="Glutamyl-tRNA reductase"/>
    <property type="match status" value="1"/>
</dbReference>
<dbReference type="FunFam" id="3.40.50.720:FF:000031">
    <property type="entry name" value="Glutamyl-tRNA reductase"/>
    <property type="match status" value="1"/>
</dbReference>
<dbReference type="Gene3D" id="3.30.460.30">
    <property type="entry name" value="Glutamyl-tRNA reductase, N-terminal domain"/>
    <property type="match status" value="1"/>
</dbReference>
<dbReference type="Gene3D" id="3.40.50.720">
    <property type="entry name" value="NAD(P)-binding Rossmann-like Domain"/>
    <property type="match status" value="1"/>
</dbReference>
<dbReference type="HAMAP" id="MF_00087">
    <property type="entry name" value="Glu_tRNA_reductase"/>
    <property type="match status" value="1"/>
</dbReference>
<dbReference type="InterPro" id="IPR000343">
    <property type="entry name" value="4pyrrol_synth_GluRdtase"/>
</dbReference>
<dbReference type="InterPro" id="IPR015896">
    <property type="entry name" value="4pyrrol_synth_GluRdtase_dimer"/>
</dbReference>
<dbReference type="InterPro" id="IPR015895">
    <property type="entry name" value="4pyrrol_synth_GluRdtase_N"/>
</dbReference>
<dbReference type="InterPro" id="IPR018214">
    <property type="entry name" value="GluRdtase_CS"/>
</dbReference>
<dbReference type="InterPro" id="IPR036453">
    <property type="entry name" value="GluRdtase_dimer_dom_sf"/>
</dbReference>
<dbReference type="InterPro" id="IPR036343">
    <property type="entry name" value="GluRdtase_N_sf"/>
</dbReference>
<dbReference type="InterPro" id="IPR036291">
    <property type="entry name" value="NAD(P)-bd_dom_sf"/>
</dbReference>
<dbReference type="InterPro" id="IPR006151">
    <property type="entry name" value="Shikm_DH/Glu-tRNA_Rdtase"/>
</dbReference>
<dbReference type="NCBIfam" id="TIGR01035">
    <property type="entry name" value="hemA"/>
    <property type="match status" value="1"/>
</dbReference>
<dbReference type="NCBIfam" id="NF000744">
    <property type="entry name" value="PRK00045.1-3"/>
    <property type="match status" value="1"/>
</dbReference>
<dbReference type="PANTHER" id="PTHR43120">
    <property type="entry name" value="GLUTAMYL-TRNA REDUCTASE 1, CHLOROPLASTIC"/>
    <property type="match status" value="1"/>
</dbReference>
<dbReference type="PANTHER" id="PTHR43120:SF1">
    <property type="entry name" value="GLUTAMYL-TRNA REDUCTASE 1, CHLOROPLASTIC"/>
    <property type="match status" value="1"/>
</dbReference>
<dbReference type="Pfam" id="PF00745">
    <property type="entry name" value="GlutR_dimer"/>
    <property type="match status" value="1"/>
</dbReference>
<dbReference type="Pfam" id="PF05201">
    <property type="entry name" value="GlutR_N"/>
    <property type="match status" value="1"/>
</dbReference>
<dbReference type="Pfam" id="PF01488">
    <property type="entry name" value="Shikimate_DH"/>
    <property type="match status" value="1"/>
</dbReference>
<dbReference type="PIRSF" id="PIRSF000445">
    <property type="entry name" value="4pyrrol_synth_GluRdtase"/>
    <property type="match status" value="1"/>
</dbReference>
<dbReference type="SUPFAM" id="SSF69742">
    <property type="entry name" value="Glutamyl tRNA-reductase catalytic, N-terminal domain"/>
    <property type="match status" value="1"/>
</dbReference>
<dbReference type="SUPFAM" id="SSF69075">
    <property type="entry name" value="Glutamyl tRNA-reductase dimerization domain"/>
    <property type="match status" value="1"/>
</dbReference>
<dbReference type="SUPFAM" id="SSF51735">
    <property type="entry name" value="NAD(P)-binding Rossmann-fold domains"/>
    <property type="match status" value="1"/>
</dbReference>
<dbReference type="PROSITE" id="PS00747">
    <property type="entry name" value="GLUTR"/>
    <property type="match status" value="1"/>
</dbReference>
<sequence length="432" mass="48542">MNIIVVGLSHKTAPVDFREKLSIPKVRIGEAIRELCNYPHIEEVAILSTCNRLEIYLLTSDTYQGIREATQFLADSSDLSLPELRQHLFILLHQDAVMHLMRVTAGLDSLIIGEGQILSQVKQCYQLGQQYQGIGPVLNNIFKQAISAGKRVRTETQISTGAVSISSAAVELAQIKKQDLRTANITILGAGKMSRLLVQHLLSKRVKDINIVNRSVERAKLLVDQFKEANINIYNLSELKTILQNSDIVFTGTSSQEPIITPELINDCDNLPSELMLFDIAVPRNVDPNVSQFDNIKVFNVDDLKVVVSQNQQTRRKMAKAAEILLEEELSAFNIWWGSLEAIPTINKLREKAEIIRVKELEKAISRLGNEFVSDHQEIVESLTRGIVNKILHDPMVQLRAQQDIEIRGRALKILQTLFNLDTIKNGMSPTL</sequence>
<gene>
    <name evidence="1" type="primary">hemA</name>
</gene>
<accession>P48077</accession>
<accession>Q9BA13</accession>
<comment type="function">
    <text evidence="1">Catalyzes the NADPH-dependent reduction of glutamyl-tRNA(Glu) to glutamate 1-semialdehyde (GSA).</text>
</comment>
<comment type="catalytic activity">
    <reaction evidence="1">
        <text>(S)-4-amino-5-oxopentanoate + tRNA(Glu) + NADP(+) = L-glutamyl-tRNA(Glu) + NADPH + H(+)</text>
        <dbReference type="Rhea" id="RHEA:12344"/>
        <dbReference type="Rhea" id="RHEA-COMP:9663"/>
        <dbReference type="Rhea" id="RHEA-COMP:9680"/>
        <dbReference type="ChEBI" id="CHEBI:15378"/>
        <dbReference type="ChEBI" id="CHEBI:57501"/>
        <dbReference type="ChEBI" id="CHEBI:57783"/>
        <dbReference type="ChEBI" id="CHEBI:58349"/>
        <dbReference type="ChEBI" id="CHEBI:78442"/>
        <dbReference type="ChEBI" id="CHEBI:78520"/>
        <dbReference type="EC" id="1.2.1.70"/>
    </reaction>
</comment>
<comment type="pathway">
    <text evidence="1">Porphyrin-containing compound metabolism; protoporphyrin-IX biosynthesis; 5-aminolevulinate from L-glutamyl-tRNA(Glu): step 1/2.</text>
</comment>
<comment type="pathway">
    <text evidence="1">Porphyrin-containing compound metabolism; chlorophyll biosynthesis.</text>
</comment>
<comment type="subunit">
    <text evidence="1">Homodimer.</text>
</comment>
<comment type="subcellular location">
    <subcellularLocation>
        <location>Plastid</location>
        <location>Cyanelle</location>
    </subcellularLocation>
</comment>
<comment type="domain">
    <text evidence="1">Possesses an unusual extended V-shaped dimeric structure with each monomer consisting of three distinct domains arranged along a curved 'spinal' alpha-helix. The N-terminal catalytic domain specifically recognizes the glutamate moiety of the substrate. The second domain is the NADPH-binding domain, and the third C-terminal domain is responsible for dimerization.</text>
</comment>
<comment type="miscellaneous">
    <text evidence="1">During catalysis, the active site Cys acts as a nucleophile attacking the alpha-carbonyl group of tRNA-bound glutamate with the formation of a thioester intermediate between enzyme and glutamate, and the concomitant release of tRNA(Glu). The thioester intermediate is finally reduced by direct hydride transfer from NADPH, to form the product GSA.</text>
</comment>
<comment type="similarity">
    <text evidence="1">Belongs to the glutamyl-tRNA reductase family.</text>
</comment>
<comment type="sequence caution" evidence="2">
    <conflict type="erroneous initiation">
        <sequence resource="EMBL-CDS" id="CAC35456"/>
    </conflict>
</comment>
<reference key="1">
    <citation type="journal article" date="1995" name="Plant Mol. Biol. Rep.">
        <title>Nucleotide sequence of the cyanelle DNA from Cyanophora paradoxa.</title>
        <authorList>
            <person name="Stirewalt V.L."/>
            <person name="Michalowski C.B."/>
            <person name="Loeffelhardt W."/>
            <person name="Bohnert H.J."/>
            <person name="Bryant D.A."/>
        </authorList>
    </citation>
    <scope>NUCLEOTIDE SEQUENCE [LARGE SCALE GENOMIC DNA]</scope>
    <source>
        <strain>UTEX LB 555 / Pringsheim</strain>
    </source>
</reference>
<reference key="2">
    <citation type="book" date="1997" name="Eukaryotism and symbiosis">
        <title>The complete sequence of the cyanelle genome of Cyanophora paradoxa: the genetic complexity of a primitive plastid.</title>
        <editorList>
            <person name="Schenk H.E.A."/>
            <person name="Herrmann R."/>
            <person name="Jeon K.W."/>
            <person name="Mueller N.E."/>
            <person name="Schwemmler W."/>
        </editorList>
        <authorList>
            <person name="Loeffelhardt W."/>
            <person name="Stirewalt V.L."/>
            <person name="Michalowski C.B."/>
            <person name="Annarella M."/>
            <person name="Farley J.Y."/>
            <person name="Schluchter W.M."/>
            <person name="Chung S."/>
            <person name="Newmann-Spallart C."/>
            <person name="Steiner J.M."/>
            <person name="Jakowitsch J."/>
            <person name="Bohnert H.J."/>
            <person name="Bryant D.A."/>
        </authorList>
    </citation>
    <scope>NUCLEOTIDE SEQUENCE [LARGE SCALE GENOMIC DNA]</scope>
    <source>
        <strain>UTEX LB 555 / Pringsheim</strain>
    </source>
</reference>
<reference key="3">
    <citation type="journal article" date="1990" name="FEBS Lett.">
        <title>The cyanelle genome of Cyanophora paradoxa encodes ribosomal proteins not encoded by the chloroplasts genomes of higher plants.</title>
        <authorList>
            <person name="Bryant D.A."/>
            <person name="Stirewalt V.L."/>
        </authorList>
    </citation>
    <scope>NUCLEOTIDE SEQUENCE [GENOMIC DNA] OF 407-432</scope>
    <source>
        <strain>UTEX LB 555 / Pringsheim</strain>
    </source>
</reference>
<geneLocation type="cyanelle"/>
<proteinExistence type="inferred from homology"/>
<name>HEM1_CYAPA</name>